<protein>
    <recommendedName>
        <fullName evidence="6">Probable WRKY transcription factor 9</fullName>
    </recommendedName>
    <alternativeName>
        <fullName evidence="6">WRKY DNA-binding protein 9</fullName>
    </alternativeName>
</protein>
<keyword id="KW-0175">Coiled coil</keyword>
<keyword id="KW-0238">DNA-binding</keyword>
<keyword id="KW-0539">Nucleus</keyword>
<keyword id="KW-1185">Reference proteome</keyword>
<keyword id="KW-0804">Transcription</keyword>
<keyword id="KW-0805">Transcription regulation</keyword>
<proteinExistence type="evidence at transcript level"/>
<reference key="1">
    <citation type="submission" date="2001-08" db="EMBL/GenBank/DDBJ databases">
        <title>Arabidopsis thaliana transcription factor WRKY9.</title>
        <authorList>
            <person name="Ulker B."/>
            <person name="Kushnir S."/>
            <person name="Somssich I.E."/>
        </authorList>
    </citation>
    <scope>NUCLEOTIDE SEQUENCE [MRNA]</scope>
    <source>
        <strain>cv. Columbia</strain>
        <tissue>Flower</tissue>
    </source>
</reference>
<reference key="2">
    <citation type="journal article" date="2000" name="Nature">
        <title>Sequence and analysis of chromosome 1 of the plant Arabidopsis thaliana.</title>
        <authorList>
            <person name="Theologis A."/>
            <person name="Ecker J.R."/>
            <person name="Palm C.J."/>
            <person name="Federspiel N.A."/>
            <person name="Kaul S."/>
            <person name="White O."/>
            <person name="Alonso J."/>
            <person name="Altafi H."/>
            <person name="Araujo R."/>
            <person name="Bowman C.L."/>
            <person name="Brooks S.Y."/>
            <person name="Buehler E."/>
            <person name="Chan A."/>
            <person name="Chao Q."/>
            <person name="Chen H."/>
            <person name="Cheuk R.F."/>
            <person name="Chin C.W."/>
            <person name="Chung M.K."/>
            <person name="Conn L."/>
            <person name="Conway A.B."/>
            <person name="Conway A.R."/>
            <person name="Creasy T.H."/>
            <person name="Dewar K."/>
            <person name="Dunn P."/>
            <person name="Etgu P."/>
            <person name="Feldblyum T.V."/>
            <person name="Feng J.-D."/>
            <person name="Fong B."/>
            <person name="Fujii C.Y."/>
            <person name="Gill J.E."/>
            <person name="Goldsmith A.D."/>
            <person name="Haas B."/>
            <person name="Hansen N.F."/>
            <person name="Hughes B."/>
            <person name="Huizar L."/>
            <person name="Hunter J.L."/>
            <person name="Jenkins J."/>
            <person name="Johnson-Hopson C."/>
            <person name="Khan S."/>
            <person name="Khaykin E."/>
            <person name="Kim C.J."/>
            <person name="Koo H.L."/>
            <person name="Kremenetskaia I."/>
            <person name="Kurtz D.B."/>
            <person name="Kwan A."/>
            <person name="Lam B."/>
            <person name="Langin-Hooper S."/>
            <person name="Lee A."/>
            <person name="Lee J.M."/>
            <person name="Lenz C.A."/>
            <person name="Li J.H."/>
            <person name="Li Y.-P."/>
            <person name="Lin X."/>
            <person name="Liu S.X."/>
            <person name="Liu Z.A."/>
            <person name="Luros J.S."/>
            <person name="Maiti R."/>
            <person name="Marziali A."/>
            <person name="Militscher J."/>
            <person name="Miranda M."/>
            <person name="Nguyen M."/>
            <person name="Nierman W.C."/>
            <person name="Osborne B.I."/>
            <person name="Pai G."/>
            <person name="Peterson J."/>
            <person name="Pham P.K."/>
            <person name="Rizzo M."/>
            <person name="Rooney T."/>
            <person name="Rowley D."/>
            <person name="Sakano H."/>
            <person name="Salzberg S.L."/>
            <person name="Schwartz J.R."/>
            <person name="Shinn P."/>
            <person name="Southwick A.M."/>
            <person name="Sun H."/>
            <person name="Tallon L.J."/>
            <person name="Tambunga G."/>
            <person name="Toriumi M.J."/>
            <person name="Town C.D."/>
            <person name="Utterback T."/>
            <person name="Van Aken S."/>
            <person name="Vaysberg M."/>
            <person name="Vysotskaia V.S."/>
            <person name="Walker M."/>
            <person name="Wu D."/>
            <person name="Yu G."/>
            <person name="Fraser C.M."/>
            <person name="Venter J.C."/>
            <person name="Davis R.W."/>
        </authorList>
    </citation>
    <scope>NUCLEOTIDE SEQUENCE [LARGE SCALE GENOMIC DNA]</scope>
    <source>
        <strain>cv. Columbia</strain>
    </source>
</reference>
<reference key="3">
    <citation type="journal article" date="2017" name="Plant J.">
        <title>Araport11: a complete reannotation of the Arabidopsis thaliana reference genome.</title>
        <authorList>
            <person name="Cheng C.Y."/>
            <person name="Krishnakumar V."/>
            <person name="Chan A.P."/>
            <person name="Thibaud-Nissen F."/>
            <person name="Schobel S."/>
            <person name="Town C.D."/>
        </authorList>
    </citation>
    <scope>GENOME REANNOTATION</scope>
    <source>
        <strain>cv. Columbia</strain>
    </source>
</reference>
<reference key="4">
    <citation type="submission" date="2009-03" db="EMBL/GenBank/DDBJ databases">
        <title>ORF cloning and analysis of Arabidopsis transcription factor genes.</title>
        <authorList>
            <person name="Fujita M."/>
            <person name="Mizukado S."/>
            <person name="Seki M."/>
            <person name="Shinozaki K."/>
            <person name="Mitsuda N."/>
            <person name="Takiguchi Y."/>
            <person name="Takagi M."/>
        </authorList>
    </citation>
    <scope>NUCLEOTIDE SEQUENCE [LARGE SCALE MRNA]</scope>
</reference>
<reference key="5">
    <citation type="journal article" date="2004" name="Proc. Natl. Acad. Sci. U.S.A.">
        <title>Hydrogen peroxide mediates plant root cell response to nutrient deprivation.</title>
        <authorList>
            <person name="Shin R."/>
            <person name="Schachtman D.P."/>
        </authorList>
    </citation>
    <scope>INDUCTION BY POTASSIUM DEPRIVATION</scope>
</reference>
<feature type="chain" id="PRO_0000133651" description="Probable WRKY transcription factor 9">
    <location>
        <begin position="1"/>
        <end position="374"/>
    </location>
</feature>
<feature type="DNA-binding region" description="WRKY" evidence="3">
    <location>
        <begin position="229"/>
        <end position="295"/>
    </location>
</feature>
<feature type="region of interest" description="Disordered" evidence="4">
    <location>
        <begin position="40"/>
        <end position="90"/>
    </location>
</feature>
<feature type="region of interest" description="Disordered" evidence="4">
    <location>
        <begin position="157"/>
        <end position="201"/>
    </location>
</feature>
<feature type="region of interest" description="Disordered" evidence="4">
    <location>
        <begin position="355"/>
        <end position="374"/>
    </location>
</feature>
<feature type="coiled-coil region" evidence="2">
    <location>
        <begin position="87"/>
        <end position="121"/>
    </location>
</feature>
<feature type="compositionally biased region" description="Basic and acidic residues" evidence="4">
    <location>
        <begin position="40"/>
        <end position="62"/>
    </location>
</feature>
<feature type="compositionally biased region" description="Acidic residues" evidence="4">
    <location>
        <begin position="63"/>
        <end position="77"/>
    </location>
</feature>
<feature type="compositionally biased region" description="Basic and acidic residues" evidence="4">
    <location>
        <begin position="161"/>
        <end position="193"/>
    </location>
</feature>
<feature type="compositionally biased region" description="Polar residues" evidence="4">
    <location>
        <begin position="363"/>
        <end position="374"/>
    </location>
</feature>
<evidence type="ECO:0000250" key="1"/>
<evidence type="ECO:0000255" key="2"/>
<evidence type="ECO:0000255" key="3">
    <source>
        <dbReference type="PROSITE-ProRule" id="PRU00223"/>
    </source>
</evidence>
<evidence type="ECO:0000256" key="4">
    <source>
        <dbReference type="SAM" id="MobiDB-lite"/>
    </source>
</evidence>
<evidence type="ECO:0000269" key="5">
    <source>
    </source>
</evidence>
<evidence type="ECO:0000305" key="6"/>
<evidence type="ECO:0000312" key="7">
    <source>
        <dbReference type="Araport" id="AT1G68150"/>
    </source>
</evidence>
<evidence type="ECO:0000312" key="8">
    <source>
        <dbReference type="EMBL" id="AAG52604.1"/>
    </source>
</evidence>
<evidence type="ECO:0000312" key="9">
    <source>
        <dbReference type="EMBL" id="AAL11006.1"/>
    </source>
</evidence>
<organism>
    <name type="scientific">Arabidopsis thaliana</name>
    <name type="common">Mouse-ear cress</name>
    <dbReference type="NCBI Taxonomy" id="3702"/>
    <lineage>
        <taxon>Eukaryota</taxon>
        <taxon>Viridiplantae</taxon>
        <taxon>Streptophyta</taxon>
        <taxon>Embryophyta</taxon>
        <taxon>Tracheophyta</taxon>
        <taxon>Spermatophyta</taxon>
        <taxon>Magnoliopsida</taxon>
        <taxon>eudicotyledons</taxon>
        <taxon>Gunneridae</taxon>
        <taxon>Pentapetalae</taxon>
        <taxon>rosids</taxon>
        <taxon>malvids</taxon>
        <taxon>Brassicales</taxon>
        <taxon>Brassicaceae</taxon>
        <taxon>Camelineae</taxon>
        <taxon>Arabidopsis</taxon>
    </lineage>
</organism>
<comment type="function">
    <text evidence="1">Transcription factor. Interacts specifically with the W box (5'-(T)TGAC[CT]-3'), a frequently occurring elicitor-responsive cis-acting element (By similarity).</text>
</comment>
<comment type="subcellular location">
    <subcellularLocation>
        <location evidence="3">Nucleus</location>
    </subcellularLocation>
</comment>
<comment type="induction">
    <text evidence="5">Induced by potassium deprivation.</text>
</comment>
<sequence length="374" mass="42743">MGFDFSTSKSKAKRQKRIEVRFASPLMGIDLSLKLEAEEKKKEIEGSKHSRENKEDEEHDASGDEDEQMVKEDEDDSSSLGLRTREEENEREELLQLQIQMESVKEENTRLRKLVEQTLEDYRHLEMKFPVIDKTKKMDLEMFLGVQGKRCVDITSKARKRGAERSPSMEREIGLSLSLEKKQKQEESKEAVQSHHQRYNSSSLDMNMPRIISSSQGNRKARVSVRARCETATMNDGCQWRKYGQKTAKGNPCPRAYYRCTVAPGCPVRKQVQRCLEDMSILITTYEGTHNHPLPVGATAMASTASTSPFLLLDSSDNLSHPSYYQTPQAIDSSLITYPQNSSYNNRTIRSLNFDGPSRGDHVSSSQNRLNWMM</sequence>
<dbReference type="EMBL" id="AY052645">
    <property type="protein sequence ID" value="AAL11006.1"/>
    <property type="molecule type" value="mRNA"/>
</dbReference>
<dbReference type="EMBL" id="AC016447">
    <property type="protein sequence ID" value="AAG52604.1"/>
    <property type="molecule type" value="Genomic_DNA"/>
</dbReference>
<dbReference type="EMBL" id="CP002684">
    <property type="protein sequence ID" value="AEE34757.1"/>
    <property type="molecule type" value="Genomic_DNA"/>
</dbReference>
<dbReference type="EMBL" id="AB493525">
    <property type="protein sequence ID" value="BAH30363.1"/>
    <property type="molecule type" value="mRNA"/>
</dbReference>
<dbReference type="PIR" id="G96704">
    <property type="entry name" value="G96704"/>
</dbReference>
<dbReference type="RefSeq" id="NP_176982.1">
    <property type="nucleotide sequence ID" value="NM_105485.4"/>
</dbReference>
<dbReference type="SMR" id="Q9C9F0"/>
<dbReference type="BioGRID" id="28364">
    <property type="interactions" value="16"/>
</dbReference>
<dbReference type="FunCoup" id="Q9C9F0">
    <property type="interactions" value="60"/>
</dbReference>
<dbReference type="IntAct" id="Q9C9F0">
    <property type="interactions" value="16"/>
</dbReference>
<dbReference type="STRING" id="3702.Q9C9F0"/>
<dbReference type="iPTMnet" id="Q9C9F0"/>
<dbReference type="PaxDb" id="3702-AT1G68150.1"/>
<dbReference type="ProteomicsDB" id="246421"/>
<dbReference type="EnsemblPlants" id="AT1G68150.1">
    <property type="protein sequence ID" value="AT1G68150.1"/>
    <property type="gene ID" value="AT1G68150"/>
</dbReference>
<dbReference type="GeneID" id="843143"/>
<dbReference type="Gramene" id="AT1G68150.1">
    <property type="protein sequence ID" value="AT1G68150.1"/>
    <property type="gene ID" value="AT1G68150"/>
</dbReference>
<dbReference type="KEGG" id="ath:AT1G68150"/>
<dbReference type="Araport" id="AT1G68150"/>
<dbReference type="TAIR" id="AT1G68150">
    <property type="gene designation" value="WRKY9"/>
</dbReference>
<dbReference type="eggNOG" id="ENOG502QU92">
    <property type="taxonomic scope" value="Eukaryota"/>
</dbReference>
<dbReference type="HOGENOM" id="CLU_021824_0_0_1"/>
<dbReference type="InParanoid" id="Q9C9F0"/>
<dbReference type="OMA" id="MKFASIQ"/>
<dbReference type="PhylomeDB" id="Q9C9F0"/>
<dbReference type="PRO" id="PR:Q9C9F0"/>
<dbReference type="Proteomes" id="UP000006548">
    <property type="component" value="Chromosome 1"/>
</dbReference>
<dbReference type="ExpressionAtlas" id="Q9C9F0">
    <property type="expression patterns" value="baseline and differential"/>
</dbReference>
<dbReference type="GO" id="GO:0005634">
    <property type="term" value="C:nucleus"/>
    <property type="evidence" value="ECO:0007669"/>
    <property type="project" value="UniProtKB-SubCell"/>
</dbReference>
<dbReference type="GO" id="GO:0003700">
    <property type="term" value="F:DNA-binding transcription factor activity"/>
    <property type="evidence" value="ECO:0000250"/>
    <property type="project" value="TAIR"/>
</dbReference>
<dbReference type="GO" id="GO:0043565">
    <property type="term" value="F:sequence-specific DNA binding"/>
    <property type="evidence" value="ECO:0007669"/>
    <property type="project" value="InterPro"/>
</dbReference>
<dbReference type="FunFam" id="2.20.25.80:FF:000002">
    <property type="entry name" value="probable WRKY transcription factor 31"/>
    <property type="match status" value="1"/>
</dbReference>
<dbReference type="Gene3D" id="2.20.25.80">
    <property type="entry name" value="WRKY domain"/>
    <property type="match status" value="1"/>
</dbReference>
<dbReference type="InterPro" id="IPR003657">
    <property type="entry name" value="WRKY_dom"/>
</dbReference>
<dbReference type="InterPro" id="IPR036576">
    <property type="entry name" value="WRKY_dom_sf"/>
</dbReference>
<dbReference type="InterPro" id="IPR044810">
    <property type="entry name" value="WRKY_plant"/>
</dbReference>
<dbReference type="PANTHER" id="PTHR31429">
    <property type="entry name" value="WRKY TRANSCRIPTION FACTOR 36-RELATED"/>
    <property type="match status" value="1"/>
</dbReference>
<dbReference type="PANTHER" id="PTHR31429:SF54">
    <property type="entry name" value="WRKY TRANSCRIPTION FACTOR 9-RELATED"/>
    <property type="match status" value="1"/>
</dbReference>
<dbReference type="Pfam" id="PF03106">
    <property type="entry name" value="WRKY"/>
    <property type="match status" value="1"/>
</dbReference>
<dbReference type="SMART" id="SM00774">
    <property type="entry name" value="WRKY"/>
    <property type="match status" value="1"/>
</dbReference>
<dbReference type="SUPFAM" id="SSF118290">
    <property type="entry name" value="WRKY DNA-binding domain"/>
    <property type="match status" value="1"/>
</dbReference>
<dbReference type="PROSITE" id="PS50811">
    <property type="entry name" value="WRKY"/>
    <property type="match status" value="1"/>
</dbReference>
<gene>
    <name evidence="9" type="primary">WRKY9</name>
    <name evidence="7" type="ordered locus">At1g68150</name>
    <name evidence="8" type="ORF">T22E19.22</name>
</gene>
<accession>Q9C9F0</accession>
<accession>C0SV22</accession>
<name>WRKY9_ARATH</name>